<feature type="chain" id="PRO_1000018150" description="Thymidine kinase">
    <location>
        <begin position="1"/>
        <end position="195"/>
    </location>
</feature>
<feature type="active site" description="Proton acceptor" evidence="1">
    <location>
        <position position="89"/>
    </location>
</feature>
<feature type="binding site" evidence="1">
    <location>
        <begin position="15"/>
        <end position="22"/>
    </location>
    <ligand>
        <name>ATP</name>
        <dbReference type="ChEBI" id="CHEBI:30616"/>
    </ligand>
</feature>
<feature type="binding site" evidence="1">
    <location>
        <begin position="88"/>
        <end position="91"/>
    </location>
    <ligand>
        <name>ATP</name>
        <dbReference type="ChEBI" id="CHEBI:30616"/>
    </ligand>
</feature>
<feature type="binding site" evidence="1">
    <location>
        <position position="145"/>
    </location>
    <ligand>
        <name>Zn(2+)</name>
        <dbReference type="ChEBI" id="CHEBI:29105"/>
    </ligand>
</feature>
<feature type="binding site" evidence="1">
    <location>
        <position position="148"/>
    </location>
    <ligand>
        <name>Zn(2+)</name>
        <dbReference type="ChEBI" id="CHEBI:29105"/>
    </ligand>
</feature>
<feature type="binding site" evidence="1">
    <location>
        <position position="183"/>
    </location>
    <ligand>
        <name>Zn(2+)</name>
        <dbReference type="ChEBI" id="CHEBI:29105"/>
    </ligand>
</feature>
<feature type="binding site" evidence="1">
    <location>
        <position position="186"/>
    </location>
    <ligand>
        <name>Zn(2+)</name>
        <dbReference type="ChEBI" id="CHEBI:29105"/>
    </ligand>
</feature>
<reference key="1">
    <citation type="journal article" date="2007" name="J. Bacteriol.">
        <title>The complete genome sequence of Bacillus thuringiensis Al Hakam.</title>
        <authorList>
            <person name="Challacombe J.F."/>
            <person name="Altherr M.R."/>
            <person name="Xie G."/>
            <person name="Bhotika S.S."/>
            <person name="Brown N."/>
            <person name="Bruce D."/>
            <person name="Campbell C.S."/>
            <person name="Campbell M.L."/>
            <person name="Chen J."/>
            <person name="Chertkov O."/>
            <person name="Cleland C."/>
            <person name="Dimitrijevic M."/>
            <person name="Doggett N.A."/>
            <person name="Fawcett J.J."/>
            <person name="Glavina T."/>
            <person name="Goodwin L.A."/>
            <person name="Green L.D."/>
            <person name="Han C.S."/>
            <person name="Hill K.K."/>
            <person name="Hitchcock P."/>
            <person name="Jackson P.J."/>
            <person name="Keim P."/>
            <person name="Kewalramani A.R."/>
            <person name="Longmire J."/>
            <person name="Lucas S."/>
            <person name="Malfatti S."/>
            <person name="Martinez D."/>
            <person name="McMurry K."/>
            <person name="Meincke L.J."/>
            <person name="Misra M."/>
            <person name="Moseman B.L."/>
            <person name="Mundt M."/>
            <person name="Munk A.C."/>
            <person name="Okinaka R.T."/>
            <person name="Parson-Quintana B."/>
            <person name="Reilly L.P."/>
            <person name="Richardson P."/>
            <person name="Robinson D.L."/>
            <person name="Saunders E."/>
            <person name="Tapia R."/>
            <person name="Tesmer J.G."/>
            <person name="Thayer N."/>
            <person name="Thompson L.S."/>
            <person name="Tice H."/>
            <person name="Ticknor L.O."/>
            <person name="Wills P.L."/>
            <person name="Gilna P."/>
            <person name="Brettin T.S."/>
        </authorList>
    </citation>
    <scope>NUCLEOTIDE SEQUENCE [LARGE SCALE GENOMIC DNA]</scope>
    <source>
        <strain>Al Hakam</strain>
    </source>
</reference>
<name>KITH_BACAH</name>
<sequence length="195" mass="21716">MYLINQNGWIEVICGSMFSGKSEELIRRVRRTQFAKQHAIVFKPCIDNRYSEEDVVSHNGLKVKAVPVSASKDIFEHITEEMDVIAIDEVQFFDGDIVEVVQVLANRGYRVIVAGLDQDFRGLPFGQVPQLMAIAEHVTKLQAVCSACGSPASRTQRLIDGEPAAFDDPIILVGASESYEPRCRHCHAVPTNKDK</sequence>
<evidence type="ECO:0000255" key="1">
    <source>
        <dbReference type="HAMAP-Rule" id="MF_00124"/>
    </source>
</evidence>
<keyword id="KW-0067">ATP-binding</keyword>
<keyword id="KW-0963">Cytoplasm</keyword>
<keyword id="KW-0237">DNA synthesis</keyword>
<keyword id="KW-0418">Kinase</keyword>
<keyword id="KW-0479">Metal-binding</keyword>
<keyword id="KW-0547">Nucleotide-binding</keyword>
<keyword id="KW-0808">Transferase</keyword>
<keyword id="KW-0862">Zinc</keyword>
<comment type="catalytic activity">
    <reaction evidence="1">
        <text>thymidine + ATP = dTMP + ADP + H(+)</text>
        <dbReference type="Rhea" id="RHEA:19129"/>
        <dbReference type="ChEBI" id="CHEBI:15378"/>
        <dbReference type="ChEBI" id="CHEBI:17748"/>
        <dbReference type="ChEBI" id="CHEBI:30616"/>
        <dbReference type="ChEBI" id="CHEBI:63528"/>
        <dbReference type="ChEBI" id="CHEBI:456216"/>
        <dbReference type="EC" id="2.7.1.21"/>
    </reaction>
</comment>
<comment type="subunit">
    <text evidence="1">Homotetramer.</text>
</comment>
<comment type="subcellular location">
    <subcellularLocation>
        <location evidence="1">Cytoplasm</location>
    </subcellularLocation>
</comment>
<comment type="similarity">
    <text evidence="1">Belongs to the thymidine kinase family.</text>
</comment>
<accession>A0RLB6</accession>
<gene>
    <name evidence="1" type="primary">tdk</name>
    <name type="ordered locus">BALH_4829</name>
</gene>
<protein>
    <recommendedName>
        <fullName evidence="1">Thymidine kinase</fullName>
        <ecNumber evidence="1">2.7.1.21</ecNumber>
    </recommendedName>
</protein>
<proteinExistence type="inferred from homology"/>
<dbReference type="EC" id="2.7.1.21" evidence="1"/>
<dbReference type="EMBL" id="CP000485">
    <property type="protein sequence ID" value="ABK88009.1"/>
    <property type="molecule type" value="Genomic_DNA"/>
</dbReference>
<dbReference type="RefSeq" id="WP_000280862.1">
    <property type="nucleotide sequence ID" value="NC_008600.1"/>
</dbReference>
<dbReference type="SMR" id="A0RLB6"/>
<dbReference type="KEGG" id="btl:BALH_4829"/>
<dbReference type="HOGENOM" id="CLU_064400_3_0_9"/>
<dbReference type="GO" id="GO:0005829">
    <property type="term" value="C:cytosol"/>
    <property type="evidence" value="ECO:0007669"/>
    <property type="project" value="TreeGrafter"/>
</dbReference>
<dbReference type="GO" id="GO:0005524">
    <property type="term" value="F:ATP binding"/>
    <property type="evidence" value="ECO:0007669"/>
    <property type="project" value="UniProtKB-UniRule"/>
</dbReference>
<dbReference type="GO" id="GO:0004797">
    <property type="term" value="F:thymidine kinase activity"/>
    <property type="evidence" value="ECO:0007669"/>
    <property type="project" value="UniProtKB-UniRule"/>
</dbReference>
<dbReference type="GO" id="GO:0008270">
    <property type="term" value="F:zinc ion binding"/>
    <property type="evidence" value="ECO:0007669"/>
    <property type="project" value="UniProtKB-UniRule"/>
</dbReference>
<dbReference type="GO" id="GO:0071897">
    <property type="term" value="P:DNA biosynthetic process"/>
    <property type="evidence" value="ECO:0007669"/>
    <property type="project" value="UniProtKB-KW"/>
</dbReference>
<dbReference type="GO" id="GO:0046104">
    <property type="term" value="P:thymidine metabolic process"/>
    <property type="evidence" value="ECO:0007669"/>
    <property type="project" value="TreeGrafter"/>
</dbReference>
<dbReference type="FunFam" id="3.30.60.20:FF:000026">
    <property type="entry name" value="Thymidine kinase"/>
    <property type="match status" value="1"/>
</dbReference>
<dbReference type="FunFam" id="3.40.50.300:FF:000384">
    <property type="entry name" value="Thymidine kinase"/>
    <property type="match status" value="1"/>
</dbReference>
<dbReference type="Gene3D" id="3.30.60.20">
    <property type="match status" value="1"/>
</dbReference>
<dbReference type="Gene3D" id="3.40.50.300">
    <property type="entry name" value="P-loop containing nucleotide triphosphate hydrolases"/>
    <property type="match status" value="1"/>
</dbReference>
<dbReference type="HAMAP" id="MF_00124">
    <property type="entry name" value="Thymidine_kinase"/>
    <property type="match status" value="1"/>
</dbReference>
<dbReference type="InterPro" id="IPR027417">
    <property type="entry name" value="P-loop_NTPase"/>
</dbReference>
<dbReference type="InterPro" id="IPR001267">
    <property type="entry name" value="Thymidine_kinase"/>
</dbReference>
<dbReference type="InterPro" id="IPR020633">
    <property type="entry name" value="Thymidine_kinase_CS"/>
</dbReference>
<dbReference type="NCBIfam" id="NF003296">
    <property type="entry name" value="PRK04296.1-1"/>
    <property type="match status" value="1"/>
</dbReference>
<dbReference type="PANTHER" id="PTHR11441">
    <property type="entry name" value="THYMIDINE KINASE"/>
    <property type="match status" value="1"/>
</dbReference>
<dbReference type="PANTHER" id="PTHR11441:SF0">
    <property type="entry name" value="THYMIDINE KINASE, CYTOSOLIC"/>
    <property type="match status" value="1"/>
</dbReference>
<dbReference type="Pfam" id="PF00265">
    <property type="entry name" value="TK"/>
    <property type="match status" value="1"/>
</dbReference>
<dbReference type="PIRSF" id="PIRSF035805">
    <property type="entry name" value="TK_cell"/>
    <property type="match status" value="1"/>
</dbReference>
<dbReference type="SUPFAM" id="SSF57716">
    <property type="entry name" value="Glucocorticoid receptor-like (DNA-binding domain)"/>
    <property type="match status" value="1"/>
</dbReference>
<dbReference type="SUPFAM" id="SSF52540">
    <property type="entry name" value="P-loop containing nucleoside triphosphate hydrolases"/>
    <property type="match status" value="1"/>
</dbReference>
<dbReference type="PROSITE" id="PS00603">
    <property type="entry name" value="TK_CELLULAR_TYPE"/>
    <property type="match status" value="1"/>
</dbReference>
<organism>
    <name type="scientific">Bacillus thuringiensis (strain Al Hakam)</name>
    <dbReference type="NCBI Taxonomy" id="412694"/>
    <lineage>
        <taxon>Bacteria</taxon>
        <taxon>Bacillati</taxon>
        <taxon>Bacillota</taxon>
        <taxon>Bacilli</taxon>
        <taxon>Bacillales</taxon>
        <taxon>Bacillaceae</taxon>
        <taxon>Bacillus</taxon>
        <taxon>Bacillus cereus group</taxon>
    </lineage>
</organism>